<reference key="1">
    <citation type="journal article" date="2003" name="Proc. Natl. Acad. Sci. U.S.A.">
        <title>The complete genome sequence of the Arabidopsis and tomato pathogen Pseudomonas syringae pv. tomato DC3000.</title>
        <authorList>
            <person name="Buell C.R."/>
            <person name="Joardar V."/>
            <person name="Lindeberg M."/>
            <person name="Selengut J."/>
            <person name="Paulsen I.T."/>
            <person name="Gwinn M.L."/>
            <person name="Dodson R.J."/>
            <person name="DeBoy R.T."/>
            <person name="Durkin A.S."/>
            <person name="Kolonay J.F."/>
            <person name="Madupu R."/>
            <person name="Daugherty S.C."/>
            <person name="Brinkac L.M."/>
            <person name="Beanan M.J."/>
            <person name="Haft D.H."/>
            <person name="Nelson W.C."/>
            <person name="Davidsen T.M."/>
            <person name="Zafar N."/>
            <person name="Zhou L."/>
            <person name="Liu J."/>
            <person name="Yuan Q."/>
            <person name="Khouri H.M."/>
            <person name="Fedorova N.B."/>
            <person name="Tran B."/>
            <person name="Russell D."/>
            <person name="Berry K.J."/>
            <person name="Utterback T.R."/>
            <person name="Van Aken S.E."/>
            <person name="Feldblyum T.V."/>
            <person name="D'Ascenzo M."/>
            <person name="Deng W.-L."/>
            <person name="Ramos A.R."/>
            <person name="Alfano J.R."/>
            <person name="Cartinhour S."/>
            <person name="Chatterjee A.K."/>
            <person name="Delaney T.P."/>
            <person name="Lazarowitz S.G."/>
            <person name="Martin G.B."/>
            <person name="Schneider D.J."/>
            <person name="Tang X."/>
            <person name="Bender C.L."/>
            <person name="White O."/>
            <person name="Fraser C.M."/>
            <person name="Collmer A."/>
        </authorList>
    </citation>
    <scope>NUCLEOTIDE SEQUENCE [LARGE SCALE GENOMIC DNA]</scope>
    <source>
        <strain>ATCC BAA-871 / DC3000</strain>
    </source>
</reference>
<feature type="chain" id="PRO_0000059692" description="UDP-3-O-acylglucosamine N-acyltransferase">
    <location>
        <begin position="1"/>
        <end position="351"/>
    </location>
</feature>
<feature type="active site" description="Proton acceptor" evidence="1">
    <location>
        <position position="240"/>
    </location>
</feature>
<keyword id="KW-0012">Acyltransferase</keyword>
<keyword id="KW-0441">Lipid A biosynthesis</keyword>
<keyword id="KW-0444">Lipid biosynthesis</keyword>
<keyword id="KW-0443">Lipid metabolism</keyword>
<keyword id="KW-1185">Reference proteome</keyword>
<keyword id="KW-0677">Repeat</keyword>
<keyword id="KW-0808">Transferase</keyword>
<sequence length="351" mass="36781">MSITIKLGQLAEFLGATLRGDKDKDITGLATLEEAGPGQISFLAKPQYRKYLVDTQAAAVLLKPADADGYTGDALLVPDPYLAYARISHFFDPKPKSSAGVHPTAVIAEDAQVDPAASIGAFAVIESGARIAANVTIGAHCFIGARSEIGEGGWLAPRVTLYHDVRIGKRVVIQSGAVLGGEGFGFVNDKGVWQKFAQIGGVTLGDDVEIGVNTAIDRGALSDTRIGNGVKLDNQIHIAHNVQIGDHTAMAACVGISGSAKIGKHCMLAGGVGLVGHIDICDGVYITGMTMVTHSITEPGSYSSGTAMQPSAEWRKSAARLRKIDDMARRLQKLEKAVETVTCADNRSSDG</sequence>
<comment type="function">
    <text evidence="1">Catalyzes the N-acylation of UDP-3-O-acylglucosamine using 3-hydroxyacyl-ACP as the acyl donor. Is involved in the biosynthesis of lipid A, a phosphorylated glycolipid that anchors the lipopolysaccharide to the outer membrane of the cell.</text>
</comment>
<comment type="catalytic activity">
    <reaction evidence="1">
        <text>a UDP-3-O-[(3R)-3-hydroxyacyl]-alpha-D-glucosamine + a (3R)-hydroxyacyl-[ACP] = a UDP-2-N,3-O-bis[(3R)-3-hydroxyacyl]-alpha-D-glucosamine + holo-[ACP] + H(+)</text>
        <dbReference type="Rhea" id="RHEA:53836"/>
        <dbReference type="Rhea" id="RHEA-COMP:9685"/>
        <dbReference type="Rhea" id="RHEA-COMP:9945"/>
        <dbReference type="ChEBI" id="CHEBI:15378"/>
        <dbReference type="ChEBI" id="CHEBI:64479"/>
        <dbReference type="ChEBI" id="CHEBI:78827"/>
        <dbReference type="ChEBI" id="CHEBI:137740"/>
        <dbReference type="ChEBI" id="CHEBI:137748"/>
        <dbReference type="EC" id="2.3.1.191"/>
    </reaction>
</comment>
<comment type="pathway">
    <text evidence="1">Bacterial outer membrane biogenesis; LPS lipid A biosynthesis.</text>
</comment>
<comment type="subunit">
    <text evidence="1">Homotrimer.</text>
</comment>
<comment type="similarity">
    <text evidence="1">Belongs to the transferase hexapeptide repeat family. LpxD subfamily.</text>
</comment>
<organism>
    <name type="scientific">Pseudomonas syringae pv. tomato (strain ATCC BAA-871 / DC3000)</name>
    <dbReference type="NCBI Taxonomy" id="223283"/>
    <lineage>
        <taxon>Bacteria</taxon>
        <taxon>Pseudomonadati</taxon>
        <taxon>Pseudomonadota</taxon>
        <taxon>Gammaproteobacteria</taxon>
        <taxon>Pseudomonadales</taxon>
        <taxon>Pseudomonadaceae</taxon>
        <taxon>Pseudomonas</taxon>
    </lineage>
</organism>
<evidence type="ECO:0000255" key="1">
    <source>
        <dbReference type="HAMAP-Rule" id="MF_00523"/>
    </source>
</evidence>
<proteinExistence type="inferred from homology"/>
<dbReference type="EC" id="2.3.1.191" evidence="1"/>
<dbReference type="EMBL" id="AE016853">
    <property type="protein sequence ID" value="AAO55064.1"/>
    <property type="molecule type" value="Genomic_DNA"/>
</dbReference>
<dbReference type="RefSeq" id="NP_791369.1">
    <property type="nucleotide sequence ID" value="NC_004578.1"/>
</dbReference>
<dbReference type="RefSeq" id="WP_005765994.1">
    <property type="nucleotide sequence ID" value="NC_004578.1"/>
</dbReference>
<dbReference type="SMR" id="Q886N3"/>
<dbReference type="STRING" id="223283.PSPTO_1544"/>
<dbReference type="GeneID" id="1183181"/>
<dbReference type="KEGG" id="pst:PSPTO_1544"/>
<dbReference type="PATRIC" id="fig|223283.9.peg.1570"/>
<dbReference type="eggNOG" id="COG1044">
    <property type="taxonomic scope" value="Bacteria"/>
</dbReference>
<dbReference type="HOGENOM" id="CLU_049865_0_1_6"/>
<dbReference type="OrthoDB" id="9784739at2"/>
<dbReference type="PhylomeDB" id="Q886N3"/>
<dbReference type="UniPathway" id="UPA00973"/>
<dbReference type="Proteomes" id="UP000002515">
    <property type="component" value="Chromosome"/>
</dbReference>
<dbReference type="GO" id="GO:0016020">
    <property type="term" value="C:membrane"/>
    <property type="evidence" value="ECO:0007669"/>
    <property type="project" value="GOC"/>
</dbReference>
<dbReference type="GO" id="GO:0016410">
    <property type="term" value="F:N-acyltransferase activity"/>
    <property type="evidence" value="ECO:0007669"/>
    <property type="project" value="InterPro"/>
</dbReference>
<dbReference type="GO" id="GO:0009245">
    <property type="term" value="P:lipid A biosynthetic process"/>
    <property type="evidence" value="ECO:0007669"/>
    <property type="project" value="UniProtKB-UniRule"/>
</dbReference>
<dbReference type="CDD" id="cd03352">
    <property type="entry name" value="LbH_LpxD"/>
    <property type="match status" value="1"/>
</dbReference>
<dbReference type="Gene3D" id="1.20.5.170">
    <property type="match status" value="1"/>
</dbReference>
<dbReference type="Gene3D" id="2.160.10.10">
    <property type="entry name" value="Hexapeptide repeat proteins"/>
    <property type="match status" value="1"/>
</dbReference>
<dbReference type="Gene3D" id="3.40.1390.10">
    <property type="entry name" value="MurE/MurF, N-terminal domain"/>
    <property type="match status" value="1"/>
</dbReference>
<dbReference type="HAMAP" id="MF_00523">
    <property type="entry name" value="LpxD"/>
    <property type="match status" value="1"/>
</dbReference>
<dbReference type="InterPro" id="IPR001451">
    <property type="entry name" value="Hexapep"/>
</dbReference>
<dbReference type="InterPro" id="IPR018357">
    <property type="entry name" value="Hexapep_transf_CS"/>
</dbReference>
<dbReference type="InterPro" id="IPR007691">
    <property type="entry name" value="LpxD"/>
</dbReference>
<dbReference type="InterPro" id="IPR011004">
    <property type="entry name" value="Trimer_LpxA-like_sf"/>
</dbReference>
<dbReference type="InterPro" id="IPR020573">
    <property type="entry name" value="UDP_GlcNAc_AcTrfase_non-rep"/>
</dbReference>
<dbReference type="NCBIfam" id="TIGR01853">
    <property type="entry name" value="lipid_A_lpxD"/>
    <property type="match status" value="1"/>
</dbReference>
<dbReference type="NCBIfam" id="NF002060">
    <property type="entry name" value="PRK00892.1"/>
    <property type="match status" value="1"/>
</dbReference>
<dbReference type="PANTHER" id="PTHR43378">
    <property type="entry name" value="UDP-3-O-ACYLGLUCOSAMINE N-ACYLTRANSFERASE"/>
    <property type="match status" value="1"/>
</dbReference>
<dbReference type="PANTHER" id="PTHR43378:SF2">
    <property type="entry name" value="UDP-3-O-ACYLGLUCOSAMINE N-ACYLTRANSFERASE 1, MITOCHONDRIAL-RELATED"/>
    <property type="match status" value="1"/>
</dbReference>
<dbReference type="Pfam" id="PF00132">
    <property type="entry name" value="Hexapep"/>
    <property type="match status" value="2"/>
</dbReference>
<dbReference type="Pfam" id="PF04613">
    <property type="entry name" value="LpxD"/>
    <property type="match status" value="1"/>
</dbReference>
<dbReference type="SUPFAM" id="SSF51161">
    <property type="entry name" value="Trimeric LpxA-like enzymes"/>
    <property type="match status" value="1"/>
</dbReference>
<dbReference type="PROSITE" id="PS00101">
    <property type="entry name" value="HEXAPEP_TRANSFERASES"/>
    <property type="match status" value="1"/>
</dbReference>
<accession>Q886N3</accession>
<protein>
    <recommendedName>
        <fullName evidence="1">UDP-3-O-acylglucosamine N-acyltransferase</fullName>
        <ecNumber evidence="1">2.3.1.191</ecNumber>
    </recommendedName>
</protein>
<name>LPXD_PSESM</name>
<gene>
    <name evidence="1" type="primary">lpxD</name>
    <name type="ordered locus">PSPTO_1544</name>
</gene>